<reference key="1">
    <citation type="journal article" date="2005" name="Proc. Natl. Acad. Sci. U.S.A.">
        <title>The complete genome sequence of Mycobacterium avium subspecies paratuberculosis.</title>
        <authorList>
            <person name="Li L."/>
            <person name="Bannantine J.P."/>
            <person name="Zhang Q."/>
            <person name="Amonsin A."/>
            <person name="May B.J."/>
            <person name="Alt D."/>
            <person name="Banerji N."/>
            <person name="Kanjilal S."/>
            <person name="Kapur V."/>
        </authorList>
    </citation>
    <scope>NUCLEOTIDE SEQUENCE [LARGE SCALE GENOMIC DNA]</scope>
    <source>
        <strain>ATCC BAA-968 / K-10</strain>
    </source>
</reference>
<keyword id="KW-1003">Cell membrane</keyword>
<keyword id="KW-0285">Flavoprotein</keyword>
<keyword id="KW-0288">FMN</keyword>
<keyword id="KW-0472">Membrane</keyword>
<keyword id="KW-0560">Oxidoreductase</keyword>
<keyword id="KW-0665">Pyrimidine biosynthesis</keyword>
<keyword id="KW-1185">Reference proteome</keyword>
<accession>Q73YS2</accession>
<organism>
    <name type="scientific">Mycolicibacterium paratuberculosis (strain ATCC BAA-968 / K-10)</name>
    <name type="common">Mycobacterium paratuberculosis</name>
    <dbReference type="NCBI Taxonomy" id="262316"/>
    <lineage>
        <taxon>Bacteria</taxon>
        <taxon>Bacillati</taxon>
        <taxon>Actinomycetota</taxon>
        <taxon>Actinomycetes</taxon>
        <taxon>Mycobacteriales</taxon>
        <taxon>Mycobacteriaceae</taxon>
        <taxon>Mycobacterium</taxon>
        <taxon>Mycobacterium avium complex (MAC)</taxon>
    </lineage>
</organism>
<evidence type="ECO:0000255" key="1">
    <source>
        <dbReference type="HAMAP-Rule" id="MF_00225"/>
    </source>
</evidence>
<protein>
    <recommendedName>
        <fullName evidence="1">Dihydroorotate dehydrogenase (quinone)</fullName>
        <ecNumber evidence="1">1.3.5.2</ecNumber>
    </recommendedName>
    <alternativeName>
        <fullName evidence="1">DHOdehase</fullName>
        <shortName evidence="1">DHOD</shortName>
        <shortName evidence="1">DHODase</shortName>
    </alternativeName>
    <alternativeName>
        <fullName evidence="1">Dihydroorotate oxidase</fullName>
    </alternativeName>
</protein>
<sequence length="370" mass="38621">MSGAPPAPRGGGHRWYGVARQLFFLVPAERIHTLVFALLRGVTAVGWPRRLLRRLLAPTDPVLASTVFGVRFPGPLGLAAGFDKDGLGLHAWGALGFGYAEIGTVTAGPQPGNPAPRLFRLPADRALLNRMGFNNLGAGALAVRLARRQPDIPIGVNIGKTKATPPDQAVDDYRASARLLGPLASYLVVNVSSPNTPGLRDLQAVGSLRPILSAVLAETSTPVLVKIAPDLSDSDVDDIADLAVELGLAGIVATNTTVSRDGLRTAGVDQLGAGGISGPPVARRAVEVLRRLYGRVGDRLVLISVGGIETADHAWERITAGASLLQGYTGFVYGGGLWAKQIHDGIAQRLRDGGFASLRDAVGSSARESG</sequence>
<feature type="chain" id="PRO_0000148456" description="Dihydroorotate dehydrogenase (quinone)">
    <location>
        <begin position="1"/>
        <end position="370"/>
    </location>
</feature>
<feature type="active site" description="Nucleophile" evidence="1">
    <location>
        <position position="193"/>
    </location>
</feature>
<feature type="binding site" evidence="1">
    <location>
        <begin position="80"/>
        <end position="84"/>
    </location>
    <ligand>
        <name>FMN</name>
        <dbReference type="ChEBI" id="CHEBI:58210"/>
    </ligand>
</feature>
<feature type="binding site" evidence="1">
    <location>
        <position position="84"/>
    </location>
    <ligand>
        <name>substrate</name>
    </ligand>
</feature>
<feature type="binding site" evidence="1">
    <location>
        <position position="104"/>
    </location>
    <ligand>
        <name>FMN</name>
        <dbReference type="ChEBI" id="CHEBI:58210"/>
    </ligand>
</feature>
<feature type="binding site" evidence="1">
    <location>
        <begin position="129"/>
        <end position="133"/>
    </location>
    <ligand>
        <name>substrate</name>
    </ligand>
</feature>
<feature type="binding site" evidence="1">
    <location>
        <position position="157"/>
    </location>
    <ligand>
        <name>FMN</name>
        <dbReference type="ChEBI" id="CHEBI:58210"/>
    </ligand>
</feature>
<feature type="binding site" evidence="1">
    <location>
        <position position="190"/>
    </location>
    <ligand>
        <name>FMN</name>
        <dbReference type="ChEBI" id="CHEBI:58210"/>
    </ligand>
</feature>
<feature type="binding site" evidence="1">
    <location>
        <position position="190"/>
    </location>
    <ligand>
        <name>substrate</name>
    </ligand>
</feature>
<feature type="binding site" evidence="1">
    <location>
        <position position="195"/>
    </location>
    <ligand>
        <name>substrate</name>
    </ligand>
</feature>
<feature type="binding site" evidence="1">
    <location>
        <position position="226"/>
    </location>
    <ligand>
        <name>FMN</name>
        <dbReference type="ChEBI" id="CHEBI:58210"/>
    </ligand>
</feature>
<feature type="binding site" evidence="1">
    <location>
        <position position="254"/>
    </location>
    <ligand>
        <name>FMN</name>
        <dbReference type="ChEBI" id="CHEBI:58210"/>
    </ligand>
</feature>
<feature type="binding site" evidence="1">
    <location>
        <begin position="255"/>
        <end position="256"/>
    </location>
    <ligand>
        <name>substrate</name>
    </ligand>
</feature>
<feature type="binding site" evidence="1">
    <location>
        <position position="278"/>
    </location>
    <ligand>
        <name>FMN</name>
        <dbReference type="ChEBI" id="CHEBI:58210"/>
    </ligand>
</feature>
<feature type="binding site" evidence="1">
    <location>
        <position position="307"/>
    </location>
    <ligand>
        <name>FMN</name>
        <dbReference type="ChEBI" id="CHEBI:58210"/>
    </ligand>
</feature>
<feature type="binding site" evidence="1">
    <location>
        <begin position="328"/>
        <end position="329"/>
    </location>
    <ligand>
        <name>FMN</name>
        <dbReference type="ChEBI" id="CHEBI:58210"/>
    </ligand>
</feature>
<name>PYRD_MYCPA</name>
<proteinExistence type="inferred from homology"/>
<gene>
    <name evidence="1" type="primary">pyrD</name>
    <name type="ordered locus">MAP_1883</name>
</gene>
<dbReference type="EC" id="1.3.5.2" evidence="1"/>
<dbReference type="EMBL" id="AE016958">
    <property type="protein sequence ID" value="AAS04200.1"/>
    <property type="molecule type" value="Genomic_DNA"/>
</dbReference>
<dbReference type="SMR" id="Q73YS2"/>
<dbReference type="STRING" id="262316.MAP_1883"/>
<dbReference type="KEGG" id="mpa:MAP_1883"/>
<dbReference type="eggNOG" id="COG0167">
    <property type="taxonomic scope" value="Bacteria"/>
</dbReference>
<dbReference type="HOGENOM" id="CLU_013640_2_0_11"/>
<dbReference type="UniPathway" id="UPA00070">
    <property type="reaction ID" value="UER00946"/>
</dbReference>
<dbReference type="Proteomes" id="UP000000580">
    <property type="component" value="Chromosome"/>
</dbReference>
<dbReference type="GO" id="GO:0005737">
    <property type="term" value="C:cytoplasm"/>
    <property type="evidence" value="ECO:0007669"/>
    <property type="project" value="InterPro"/>
</dbReference>
<dbReference type="GO" id="GO:0005886">
    <property type="term" value="C:plasma membrane"/>
    <property type="evidence" value="ECO:0007669"/>
    <property type="project" value="UniProtKB-SubCell"/>
</dbReference>
<dbReference type="GO" id="GO:0106430">
    <property type="term" value="F:dihydroorotate dehydrogenase (quinone) activity"/>
    <property type="evidence" value="ECO:0007669"/>
    <property type="project" value="UniProtKB-EC"/>
</dbReference>
<dbReference type="GO" id="GO:0006207">
    <property type="term" value="P:'de novo' pyrimidine nucleobase biosynthetic process"/>
    <property type="evidence" value="ECO:0007669"/>
    <property type="project" value="InterPro"/>
</dbReference>
<dbReference type="GO" id="GO:0044205">
    <property type="term" value="P:'de novo' UMP biosynthetic process"/>
    <property type="evidence" value="ECO:0007669"/>
    <property type="project" value="UniProtKB-UniRule"/>
</dbReference>
<dbReference type="CDD" id="cd04738">
    <property type="entry name" value="DHOD_2_like"/>
    <property type="match status" value="1"/>
</dbReference>
<dbReference type="FunFam" id="3.20.20.70:FF:000123">
    <property type="entry name" value="Dihydroorotate dehydrogenase (quinone)"/>
    <property type="match status" value="1"/>
</dbReference>
<dbReference type="Gene3D" id="3.20.20.70">
    <property type="entry name" value="Aldolase class I"/>
    <property type="match status" value="1"/>
</dbReference>
<dbReference type="HAMAP" id="MF_00225">
    <property type="entry name" value="DHO_dh_type2"/>
    <property type="match status" value="1"/>
</dbReference>
<dbReference type="InterPro" id="IPR013785">
    <property type="entry name" value="Aldolase_TIM"/>
</dbReference>
<dbReference type="InterPro" id="IPR050074">
    <property type="entry name" value="DHO_dehydrogenase"/>
</dbReference>
<dbReference type="InterPro" id="IPR005719">
    <property type="entry name" value="Dihydroorotate_DH_2"/>
</dbReference>
<dbReference type="InterPro" id="IPR005720">
    <property type="entry name" value="Dihydroorotate_DH_cat"/>
</dbReference>
<dbReference type="InterPro" id="IPR001295">
    <property type="entry name" value="Dihydroorotate_DH_CS"/>
</dbReference>
<dbReference type="NCBIfam" id="NF003648">
    <property type="entry name" value="PRK05286.2-1"/>
    <property type="match status" value="1"/>
</dbReference>
<dbReference type="NCBIfam" id="NF003652">
    <property type="entry name" value="PRK05286.2-5"/>
    <property type="match status" value="1"/>
</dbReference>
<dbReference type="NCBIfam" id="TIGR01036">
    <property type="entry name" value="pyrD_sub2"/>
    <property type="match status" value="1"/>
</dbReference>
<dbReference type="PANTHER" id="PTHR48109:SF4">
    <property type="entry name" value="DIHYDROOROTATE DEHYDROGENASE (QUINONE), MITOCHONDRIAL"/>
    <property type="match status" value="1"/>
</dbReference>
<dbReference type="PANTHER" id="PTHR48109">
    <property type="entry name" value="DIHYDROOROTATE DEHYDROGENASE (QUINONE), MITOCHONDRIAL-RELATED"/>
    <property type="match status" value="1"/>
</dbReference>
<dbReference type="Pfam" id="PF01180">
    <property type="entry name" value="DHO_dh"/>
    <property type="match status" value="1"/>
</dbReference>
<dbReference type="SUPFAM" id="SSF51395">
    <property type="entry name" value="FMN-linked oxidoreductases"/>
    <property type="match status" value="1"/>
</dbReference>
<dbReference type="PROSITE" id="PS00911">
    <property type="entry name" value="DHODEHASE_1"/>
    <property type="match status" value="1"/>
</dbReference>
<dbReference type="PROSITE" id="PS00912">
    <property type="entry name" value="DHODEHASE_2"/>
    <property type="match status" value="1"/>
</dbReference>
<comment type="function">
    <text evidence="1">Catalyzes the conversion of dihydroorotate to orotate with quinone as electron acceptor.</text>
</comment>
<comment type="catalytic activity">
    <reaction evidence="1">
        <text>(S)-dihydroorotate + a quinone = orotate + a quinol</text>
        <dbReference type="Rhea" id="RHEA:30187"/>
        <dbReference type="ChEBI" id="CHEBI:24646"/>
        <dbReference type="ChEBI" id="CHEBI:30839"/>
        <dbReference type="ChEBI" id="CHEBI:30864"/>
        <dbReference type="ChEBI" id="CHEBI:132124"/>
        <dbReference type="EC" id="1.3.5.2"/>
    </reaction>
</comment>
<comment type="cofactor">
    <cofactor evidence="1">
        <name>FMN</name>
        <dbReference type="ChEBI" id="CHEBI:58210"/>
    </cofactor>
    <text evidence="1">Binds 1 FMN per subunit.</text>
</comment>
<comment type="pathway">
    <text evidence="1">Pyrimidine metabolism; UMP biosynthesis via de novo pathway; orotate from (S)-dihydroorotate (quinone route): step 1/1.</text>
</comment>
<comment type="subunit">
    <text evidence="1">Monomer.</text>
</comment>
<comment type="subcellular location">
    <subcellularLocation>
        <location evidence="1">Cell membrane</location>
        <topology evidence="1">Peripheral membrane protein</topology>
    </subcellularLocation>
</comment>
<comment type="similarity">
    <text evidence="1">Belongs to the dihydroorotate dehydrogenase family. Type 2 subfamily.</text>
</comment>